<evidence type="ECO:0000250" key="1"/>
<evidence type="ECO:0000255" key="2">
    <source>
        <dbReference type="HAMAP-Rule" id="MF_00736"/>
    </source>
</evidence>
<evidence type="ECO:0000305" key="3"/>
<name>RL11_STACT</name>
<gene>
    <name evidence="2" type="primary">rplK</name>
    <name type="ordered locus">Sca_0193</name>
</gene>
<accession>P36254</accession>
<accession>B9DKX0</accession>
<comment type="function">
    <text evidence="2">Forms part of the ribosomal stalk which helps the ribosome interact with GTP-bound translation factors.</text>
</comment>
<comment type="subunit">
    <text evidence="2">Part of the ribosomal stalk of the 50S ribosomal subunit. Interacts with L10 and the large rRNA to form the base of the stalk. L10 forms an elongated spine to which L12 dimers bind in a sequential fashion forming a multimeric L10(L12)X complex.</text>
</comment>
<comment type="PTM">
    <text evidence="2">One or more lysine residues are methylated.</text>
</comment>
<comment type="similarity">
    <text evidence="2">Belongs to the universal ribosomal protein uL11 family.</text>
</comment>
<protein>
    <recommendedName>
        <fullName evidence="2">Large ribosomal subunit protein uL11</fullName>
    </recommendedName>
    <alternativeName>
        <fullName evidence="3">50S ribosomal protein L11</fullName>
    </alternativeName>
</protein>
<dbReference type="EMBL" id="X76134">
    <property type="protein sequence ID" value="CAA53739.1"/>
    <property type="molecule type" value="Genomic_DNA"/>
</dbReference>
<dbReference type="EMBL" id="AM295250">
    <property type="protein sequence ID" value="CAL27106.1"/>
    <property type="molecule type" value="Genomic_DNA"/>
</dbReference>
<dbReference type="PIR" id="S38871">
    <property type="entry name" value="S38871"/>
</dbReference>
<dbReference type="RefSeq" id="WP_012664221.1">
    <property type="nucleotide sequence ID" value="NC_012121.1"/>
</dbReference>
<dbReference type="SMR" id="P36254"/>
<dbReference type="GeneID" id="93795123"/>
<dbReference type="KEGG" id="sca:SCA_0193"/>
<dbReference type="eggNOG" id="COG0080">
    <property type="taxonomic scope" value="Bacteria"/>
</dbReference>
<dbReference type="HOGENOM" id="CLU_074237_2_1_9"/>
<dbReference type="OrthoDB" id="9802408at2"/>
<dbReference type="BioCyc" id="SCAR396513:SCA_RS01000-MONOMER"/>
<dbReference type="Proteomes" id="UP000000444">
    <property type="component" value="Chromosome"/>
</dbReference>
<dbReference type="GO" id="GO:0022625">
    <property type="term" value="C:cytosolic large ribosomal subunit"/>
    <property type="evidence" value="ECO:0007669"/>
    <property type="project" value="TreeGrafter"/>
</dbReference>
<dbReference type="GO" id="GO:0070180">
    <property type="term" value="F:large ribosomal subunit rRNA binding"/>
    <property type="evidence" value="ECO:0007669"/>
    <property type="project" value="UniProtKB-UniRule"/>
</dbReference>
<dbReference type="GO" id="GO:0003735">
    <property type="term" value="F:structural constituent of ribosome"/>
    <property type="evidence" value="ECO:0007669"/>
    <property type="project" value="InterPro"/>
</dbReference>
<dbReference type="GO" id="GO:0006412">
    <property type="term" value="P:translation"/>
    <property type="evidence" value="ECO:0007669"/>
    <property type="project" value="UniProtKB-UniRule"/>
</dbReference>
<dbReference type="CDD" id="cd00349">
    <property type="entry name" value="Ribosomal_L11"/>
    <property type="match status" value="1"/>
</dbReference>
<dbReference type="FunFam" id="1.10.10.250:FF:000001">
    <property type="entry name" value="50S ribosomal protein L11"/>
    <property type="match status" value="1"/>
</dbReference>
<dbReference type="FunFam" id="3.30.1550.10:FF:000001">
    <property type="entry name" value="50S ribosomal protein L11"/>
    <property type="match status" value="1"/>
</dbReference>
<dbReference type="Gene3D" id="1.10.10.250">
    <property type="entry name" value="Ribosomal protein L11, C-terminal domain"/>
    <property type="match status" value="1"/>
</dbReference>
<dbReference type="Gene3D" id="3.30.1550.10">
    <property type="entry name" value="Ribosomal protein L11/L12, N-terminal domain"/>
    <property type="match status" value="1"/>
</dbReference>
<dbReference type="HAMAP" id="MF_00736">
    <property type="entry name" value="Ribosomal_uL11"/>
    <property type="match status" value="1"/>
</dbReference>
<dbReference type="InterPro" id="IPR000911">
    <property type="entry name" value="Ribosomal_uL11"/>
</dbReference>
<dbReference type="InterPro" id="IPR006519">
    <property type="entry name" value="Ribosomal_uL11_bac-typ"/>
</dbReference>
<dbReference type="InterPro" id="IPR020783">
    <property type="entry name" value="Ribosomal_uL11_C"/>
</dbReference>
<dbReference type="InterPro" id="IPR036769">
    <property type="entry name" value="Ribosomal_uL11_C_sf"/>
</dbReference>
<dbReference type="InterPro" id="IPR020785">
    <property type="entry name" value="Ribosomal_uL11_CS"/>
</dbReference>
<dbReference type="InterPro" id="IPR020784">
    <property type="entry name" value="Ribosomal_uL11_N"/>
</dbReference>
<dbReference type="InterPro" id="IPR036796">
    <property type="entry name" value="Ribosomal_uL11_N_sf"/>
</dbReference>
<dbReference type="NCBIfam" id="TIGR01632">
    <property type="entry name" value="L11_bact"/>
    <property type="match status" value="1"/>
</dbReference>
<dbReference type="PANTHER" id="PTHR11661">
    <property type="entry name" value="60S RIBOSOMAL PROTEIN L12"/>
    <property type="match status" value="1"/>
</dbReference>
<dbReference type="PANTHER" id="PTHR11661:SF1">
    <property type="entry name" value="LARGE RIBOSOMAL SUBUNIT PROTEIN UL11M"/>
    <property type="match status" value="1"/>
</dbReference>
<dbReference type="Pfam" id="PF00298">
    <property type="entry name" value="Ribosomal_L11"/>
    <property type="match status" value="1"/>
</dbReference>
<dbReference type="Pfam" id="PF03946">
    <property type="entry name" value="Ribosomal_L11_N"/>
    <property type="match status" value="1"/>
</dbReference>
<dbReference type="SMART" id="SM00649">
    <property type="entry name" value="RL11"/>
    <property type="match status" value="1"/>
</dbReference>
<dbReference type="SUPFAM" id="SSF54747">
    <property type="entry name" value="Ribosomal L11/L12e N-terminal domain"/>
    <property type="match status" value="1"/>
</dbReference>
<dbReference type="SUPFAM" id="SSF46906">
    <property type="entry name" value="Ribosomal protein L11, C-terminal domain"/>
    <property type="match status" value="1"/>
</dbReference>
<dbReference type="PROSITE" id="PS00359">
    <property type="entry name" value="RIBOSOMAL_L11"/>
    <property type="match status" value="1"/>
</dbReference>
<keyword id="KW-0488">Methylation</keyword>
<keyword id="KW-1185">Reference proteome</keyword>
<keyword id="KW-0687">Ribonucleoprotein</keyword>
<keyword id="KW-0689">Ribosomal protein</keyword>
<keyword id="KW-0694">RNA-binding</keyword>
<keyword id="KW-0699">rRNA-binding</keyword>
<feature type="initiator methionine" description="Removed" evidence="1">
    <location>
        <position position="1"/>
    </location>
</feature>
<feature type="chain" id="PRO_0000104367" description="Large ribosomal subunit protein uL11">
    <location>
        <begin position="2"/>
        <end position="140"/>
    </location>
</feature>
<reference key="1">
    <citation type="journal article" date="1994" name="FEMS Microbiol. Lett.">
        <title>The Staphylococcus carnosus secE gene: cloning, nucleotide sequence, and functional characterization in Escherichia coli secE mutant strains.</title>
        <authorList>
            <person name="Meens J."/>
            <person name="Klose M."/>
            <person name="Freudl R."/>
        </authorList>
    </citation>
    <scope>NUCLEOTIDE SEQUENCE [GENOMIC DNA]</scope>
</reference>
<reference key="2">
    <citation type="journal article" date="2009" name="Appl. Environ. Microbiol.">
        <title>Genome analysis of the meat starter culture bacterium Staphylococcus carnosus TM300.</title>
        <authorList>
            <person name="Rosenstein R."/>
            <person name="Nerz C."/>
            <person name="Biswas L."/>
            <person name="Resch A."/>
            <person name="Raddatz G."/>
            <person name="Schuster S.C."/>
            <person name="Goetz F."/>
        </authorList>
    </citation>
    <scope>NUCLEOTIDE SEQUENCE [LARGE SCALE GENOMIC DNA]</scope>
    <source>
        <strain>TM300</strain>
    </source>
</reference>
<organism>
    <name type="scientific">Staphylococcus carnosus (strain TM300)</name>
    <dbReference type="NCBI Taxonomy" id="396513"/>
    <lineage>
        <taxon>Bacteria</taxon>
        <taxon>Bacillati</taxon>
        <taxon>Bacillota</taxon>
        <taxon>Bacilli</taxon>
        <taxon>Bacillales</taxon>
        <taxon>Staphylococcaceae</taxon>
        <taxon>Staphylococcus</taxon>
    </lineage>
</organism>
<proteinExistence type="inferred from homology"/>
<sequence>MAKKVEKVVKLQIPAGKANPAPPVGPALGQAGVNIMGFCKEFNARTQEQAGLIIPVEISVYEDRSFTFITKTPPAPVLLKKAAGVEKGSGEPNKNKVATVTKDQVREIAQTKMPDLNAADEEAAMRIIEGTARSMGITVE</sequence>